<proteinExistence type="inferred from homology"/>
<reference key="1">
    <citation type="journal article" date="2003" name="J. Bacteriol.">
        <title>Comparative analyses of the complete genome sequences of Pierce's disease and citrus variegated chlorosis strains of Xylella fastidiosa.</title>
        <authorList>
            <person name="Van Sluys M.A."/>
            <person name="de Oliveira M.C."/>
            <person name="Monteiro-Vitorello C.B."/>
            <person name="Miyaki C.Y."/>
            <person name="Furlan L.R."/>
            <person name="Camargo L.E.A."/>
            <person name="da Silva A.C.R."/>
            <person name="Moon D.H."/>
            <person name="Takita M.A."/>
            <person name="Lemos E.G.M."/>
            <person name="Machado M.A."/>
            <person name="Ferro M.I.T."/>
            <person name="da Silva F.R."/>
            <person name="Goldman M.H.S."/>
            <person name="Goldman G.H."/>
            <person name="Lemos M.V.F."/>
            <person name="El-Dorry H."/>
            <person name="Tsai S.M."/>
            <person name="Carrer H."/>
            <person name="Carraro D.M."/>
            <person name="de Oliveira R.C."/>
            <person name="Nunes L.R."/>
            <person name="Siqueira W.J."/>
            <person name="Coutinho L.L."/>
            <person name="Kimura E.T."/>
            <person name="Ferro E.S."/>
            <person name="Harakava R."/>
            <person name="Kuramae E.E."/>
            <person name="Marino C.L."/>
            <person name="Giglioti E."/>
            <person name="Abreu I.L."/>
            <person name="Alves L.M.C."/>
            <person name="do Amaral A.M."/>
            <person name="Baia G.S."/>
            <person name="Blanco S.R."/>
            <person name="Brito M.S."/>
            <person name="Cannavan F.S."/>
            <person name="Celestino A.V."/>
            <person name="da Cunha A.F."/>
            <person name="Fenille R.C."/>
            <person name="Ferro J.A."/>
            <person name="Formighieri E.F."/>
            <person name="Kishi L.T."/>
            <person name="Leoni S.G."/>
            <person name="Oliveira A.R."/>
            <person name="Rosa V.E. Jr."/>
            <person name="Sassaki F.T."/>
            <person name="Sena J.A.D."/>
            <person name="de Souza A.A."/>
            <person name="Truffi D."/>
            <person name="Tsukumo F."/>
            <person name="Yanai G.M."/>
            <person name="Zaros L.G."/>
            <person name="Civerolo E.L."/>
            <person name="Simpson A.J.G."/>
            <person name="Almeida N.F. Jr."/>
            <person name="Setubal J.C."/>
            <person name="Kitajima J.P."/>
        </authorList>
    </citation>
    <scope>NUCLEOTIDE SEQUENCE [LARGE SCALE GENOMIC DNA]</scope>
    <source>
        <strain>Temecula1 / ATCC 700964</strain>
    </source>
</reference>
<keyword id="KW-0227">DNA damage</keyword>
<keyword id="KW-0233">DNA recombination</keyword>
<keyword id="KW-0234">DNA repair</keyword>
<keyword id="KW-1185">Reference proteome</keyword>
<dbReference type="EMBL" id="AE009442">
    <property type="protein sequence ID" value="AAO29141.1"/>
    <property type="molecule type" value="Genomic_DNA"/>
</dbReference>
<dbReference type="RefSeq" id="WP_004088289.1">
    <property type="nucleotide sequence ID" value="NC_004556.1"/>
</dbReference>
<dbReference type="SMR" id="Q87C04"/>
<dbReference type="GeneID" id="93905106"/>
<dbReference type="KEGG" id="xft:PD_1292"/>
<dbReference type="HOGENOM" id="CLU_066645_1_0_6"/>
<dbReference type="Proteomes" id="UP000002516">
    <property type="component" value="Chromosome"/>
</dbReference>
<dbReference type="GO" id="GO:0043590">
    <property type="term" value="C:bacterial nucleoid"/>
    <property type="evidence" value="ECO:0007669"/>
    <property type="project" value="TreeGrafter"/>
</dbReference>
<dbReference type="GO" id="GO:0006310">
    <property type="term" value="P:DNA recombination"/>
    <property type="evidence" value="ECO:0007669"/>
    <property type="project" value="UniProtKB-UniRule"/>
</dbReference>
<dbReference type="GO" id="GO:0006302">
    <property type="term" value="P:double-strand break repair"/>
    <property type="evidence" value="ECO:0007669"/>
    <property type="project" value="TreeGrafter"/>
</dbReference>
<dbReference type="Gene3D" id="2.40.50.140">
    <property type="entry name" value="Nucleic acid-binding proteins"/>
    <property type="match status" value="1"/>
</dbReference>
<dbReference type="Gene3D" id="1.20.1440.120">
    <property type="entry name" value="Recombination protein O, C-terminal domain"/>
    <property type="match status" value="1"/>
</dbReference>
<dbReference type="HAMAP" id="MF_00201">
    <property type="entry name" value="RecO"/>
    <property type="match status" value="1"/>
</dbReference>
<dbReference type="InterPro" id="IPR037278">
    <property type="entry name" value="ARFGAP/RecO"/>
</dbReference>
<dbReference type="InterPro" id="IPR022572">
    <property type="entry name" value="DNA_rep/recomb_RecO_N"/>
</dbReference>
<dbReference type="InterPro" id="IPR012340">
    <property type="entry name" value="NA-bd_OB-fold"/>
</dbReference>
<dbReference type="InterPro" id="IPR003717">
    <property type="entry name" value="RecO"/>
</dbReference>
<dbReference type="InterPro" id="IPR042242">
    <property type="entry name" value="RecO_C"/>
</dbReference>
<dbReference type="NCBIfam" id="TIGR00613">
    <property type="entry name" value="reco"/>
    <property type="match status" value="1"/>
</dbReference>
<dbReference type="PANTHER" id="PTHR33991">
    <property type="entry name" value="DNA REPAIR PROTEIN RECO"/>
    <property type="match status" value="1"/>
</dbReference>
<dbReference type="PANTHER" id="PTHR33991:SF1">
    <property type="entry name" value="DNA REPAIR PROTEIN RECO"/>
    <property type="match status" value="1"/>
</dbReference>
<dbReference type="Pfam" id="PF02565">
    <property type="entry name" value="RecO_C"/>
    <property type="match status" value="1"/>
</dbReference>
<dbReference type="Pfam" id="PF11967">
    <property type="entry name" value="RecO_N"/>
    <property type="match status" value="1"/>
</dbReference>
<dbReference type="SUPFAM" id="SSF57863">
    <property type="entry name" value="ArfGap/RecO-like zinc finger"/>
    <property type="match status" value="1"/>
</dbReference>
<dbReference type="SUPFAM" id="SSF50249">
    <property type="entry name" value="Nucleic acid-binding proteins"/>
    <property type="match status" value="1"/>
</dbReference>
<organism>
    <name type="scientific">Xylella fastidiosa (strain Temecula1 / ATCC 700964)</name>
    <dbReference type="NCBI Taxonomy" id="183190"/>
    <lineage>
        <taxon>Bacteria</taxon>
        <taxon>Pseudomonadati</taxon>
        <taxon>Pseudomonadota</taxon>
        <taxon>Gammaproteobacteria</taxon>
        <taxon>Lysobacterales</taxon>
        <taxon>Lysobacteraceae</taxon>
        <taxon>Xylella</taxon>
    </lineage>
</organism>
<gene>
    <name evidence="1" type="primary">recO</name>
    <name type="ordered locus">PD_1292</name>
</gene>
<protein>
    <recommendedName>
        <fullName evidence="1">DNA repair protein RecO</fullName>
    </recommendedName>
    <alternativeName>
        <fullName evidence="1">Recombination protein O</fullName>
    </alternativeName>
</protein>
<feature type="chain" id="PRO_0000205030" description="DNA repair protein RecO">
    <location>
        <begin position="1"/>
        <end position="243"/>
    </location>
</feature>
<evidence type="ECO:0000255" key="1">
    <source>
        <dbReference type="HAMAP-Rule" id="MF_00201"/>
    </source>
</evidence>
<comment type="function">
    <text evidence="1">Involved in DNA repair and RecF pathway recombination.</text>
</comment>
<comment type="similarity">
    <text evidence="1">Belongs to the RecO family.</text>
</comment>
<name>RECO_XYLFT</name>
<accession>Q87C04</accession>
<sequence>MLIEHEVAFVLHVRPWRETSLLVEVLTQAYGRLGLIARGVQGLKKQTLRAALQPLQWIRFSAIQRGELGQLRQAEALDTAPRLKGETMLASFYINELLLRLVPRHAPVNELYLAYSQTRERLRTNDSLAWSLRLFELDILETLGVGFNLECDANGTPLDPAARYVLDPLEGPRLLLSEHNNAERRDTATGHVLLALAHKQIPNTNDLAGLRRSMRAVLLHHLGGRGLKSWEMIAAFRHQDTSP</sequence>